<feature type="chain" id="PRO_1000191642" description="Malate dehydrogenase">
    <location>
        <begin position="1"/>
        <end position="312"/>
    </location>
</feature>
<feature type="active site" description="Proton acceptor" evidence="1">
    <location>
        <position position="180"/>
    </location>
</feature>
<feature type="binding site" evidence="1">
    <location>
        <begin position="12"/>
        <end position="17"/>
    </location>
    <ligand>
        <name>NAD(+)</name>
        <dbReference type="ChEBI" id="CHEBI:57540"/>
    </ligand>
</feature>
<feature type="binding site" evidence="1">
    <location>
        <position position="36"/>
    </location>
    <ligand>
        <name>NAD(+)</name>
        <dbReference type="ChEBI" id="CHEBI:57540"/>
    </ligand>
</feature>
<feature type="binding site" evidence="1">
    <location>
        <position position="87"/>
    </location>
    <ligand>
        <name>substrate</name>
    </ligand>
</feature>
<feature type="binding site" evidence="1">
    <location>
        <position position="93"/>
    </location>
    <ligand>
        <name>substrate</name>
    </ligand>
</feature>
<feature type="binding site" evidence="1">
    <location>
        <position position="100"/>
    </location>
    <ligand>
        <name>NAD(+)</name>
        <dbReference type="ChEBI" id="CHEBI:57540"/>
    </ligand>
</feature>
<feature type="binding site" evidence="1">
    <location>
        <begin position="123"/>
        <end position="125"/>
    </location>
    <ligand>
        <name>NAD(+)</name>
        <dbReference type="ChEBI" id="CHEBI:57540"/>
    </ligand>
</feature>
<feature type="binding site" evidence="1">
    <location>
        <position position="125"/>
    </location>
    <ligand>
        <name>substrate</name>
    </ligand>
</feature>
<feature type="binding site" evidence="1">
    <location>
        <position position="156"/>
    </location>
    <ligand>
        <name>substrate</name>
    </ligand>
</feature>
<feature type="modified residue" description="Phosphoserine" evidence="1">
    <location>
        <position position="149"/>
    </location>
</feature>
<keyword id="KW-0520">NAD</keyword>
<keyword id="KW-0560">Oxidoreductase</keyword>
<keyword id="KW-0597">Phosphoprotein</keyword>
<keyword id="KW-0816">Tricarboxylic acid cycle</keyword>
<comment type="function">
    <text evidence="1">Catalyzes the reversible oxidation of malate to oxaloacetate.</text>
</comment>
<comment type="catalytic activity">
    <reaction evidence="1">
        <text>(S)-malate + NAD(+) = oxaloacetate + NADH + H(+)</text>
        <dbReference type="Rhea" id="RHEA:21432"/>
        <dbReference type="ChEBI" id="CHEBI:15378"/>
        <dbReference type="ChEBI" id="CHEBI:15589"/>
        <dbReference type="ChEBI" id="CHEBI:16452"/>
        <dbReference type="ChEBI" id="CHEBI:57540"/>
        <dbReference type="ChEBI" id="CHEBI:57945"/>
        <dbReference type="EC" id="1.1.1.37"/>
    </reaction>
</comment>
<comment type="similarity">
    <text evidence="1">Belongs to the LDH/MDH superfamily. MDH type 3 family.</text>
</comment>
<evidence type="ECO:0000255" key="1">
    <source>
        <dbReference type="HAMAP-Rule" id="MF_00487"/>
    </source>
</evidence>
<organism>
    <name type="scientific">Bacillus cereus (strain 03BB102)</name>
    <dbReference type="NCBI Taxonomy" id="572264"/>
    <lineage>
        <taxon>Bacteria</taxon>
        <taxon>Bacillati</taxon>
        <taxon>Bacillota</taxon>
        <taxon>Bacilli</taxon>
        <taxon>Bacillales</taxon>
        <taxon>Bacillaceae</taxon>
        <taxon>Bacillus</taxon>
        <taxon>Bacillus cereus group</taxon>
    </lineage>
</organism>
<proteinExistence type="inferred from homology"/>
<reference key="1">
    <citation type="submission" date="2009-02" db="EMBL/GenBank/DDBJ databases">
        <title>Genome sequence of Bacillus cereus 03BB102.</title>
        <authorList>
            <person name="Dodson R.J."/>
            <person name="Jackson P."/>
            <person name="Munk A.C."/>
            <person name="Brettin T."/>
            <person name="Bruce D."/>
            <person name="Detter C."/>
            <person name="Tapia R."/>
            <person name="Han C."/>
            <person name="Sutton G."/>
            <person name="Sims D."/>
        </authorList>
    </citation>
    <scope>NUCLEOTIDE SEQUENCE [LARGE SCALE GENOMIC DNA]</scope>
    <source>
        <strain>03BB102</strain>
    </source>
</reference>
<protein>
    <recommendedName>
        <fullName evidence="1">Malate dehydrogenase</fullName>
        <ecNumber evidence="1">1.1.1.37</ecNumber>
    </recommendedName>
</protein>
<dbReference type="EC" id="1.1.1.37" evidence="1"/>
<dbReference type="EMBL" id="CP001407">
    <property type="protein sequence ID" value="ACO29854.1"/>
    <property type="molecule type" value="Genomic_DNA"/>
</dbReference>
<dbReference type="RefSeq" id="WP_000153232.1">
    <property type="nucleotide sequence ID" value="NZ_CP009318.1"/>
</dbReference>
<dbReference type="SMR" id="C1EUT6"/>
<dbReference type="GeneID" id="93006518"/>
<dbReference type="KEGG" id="bcx:BCA_4702"/>
<dbReference type="PATRIC" id="fig|572264.18.peg.4651"/>
<dbReference type="Proteomes" id="UP000002210">
    <property type="component" value="Chromosome"/>
</dbReference>
<dbReference type="GO" id="GO:0004459">
    <property type="term" value="F:L-lactate dehydrogenase activity"/>
    <property type="evidence" value="ECO:0007669"/>
    <property type="project" value="TreeGrafter"/>
</dbReference>
<dbReference type="GO" id="GO:0030060">
    <property type="term" value="F:L-malate dehydrogenase (NAD+) activity"/>
    <property type="evidence" value="ECO:0007669"/>
    <property type="project" value="UniProtKB-UniRule"/>
</dbReference>
<dbReference type="GO" id="GO:0006089">
    <property type="term" value="P:lactate metabolic process"/>
    <property type="evidence" value="ECO:0007669"/>
    <property type="project" value="TreeGrafter"/>
</dbReference>
<dbReference type="GO" id="GO:0006099">
    <property type="term" value="P:tricarboxylic acid cycle"/>
    <property type="evidence" value="ECO:0007669"/>
    <property type="project" value="UniProtKB-UniRule"/>
</dbReference>
<dbReference type="CDD" id="cd01339">
    <property type="entry name" value="LDH-like_MDH"/>
    <property type="match status" value="1"/>
</dbReference>
<dbReference type="FunFam" id="3.40.50.720:FF:000018">
    <property type="entry name" value="Malate dehydrogenase"/>
    <property type="match status" value="1"/>
</dbReference>
<dbReference type="FunFam" id="3.90.110.10:FF:000004">
    <property type="entry name" value="Malate dehydrogenase"/>
    <property type="match status" value="1"/>
</dbReference>
<dbReference type="Gene3D" id="3.90.110.10">
    <property type="entry name" value="Lactate dehydrogenase/glycoside hydrolase, family 4, C-terminal"/>
    <property type="match status" value="1"/>
</dbReference>
<dbReference type="Gene3D" id="3.40.50.720">
    <property type="entry name" value="NAD(P)-binding Rossmann-like Domain"/>
    <property type="match status" value="1"/>
</dbReference>
<dbReference type="HAMAP" id="MF_00487">
    <property type="entry name" value="Malate_dehydrog_3"/>
    <property type="match status" value="1"/>
</dbReference>
<dbReference type="InterPro" id="IPR001557">
    <property type="entry name" value="L-lactate/malate_DH"/>
</dbReference>
<dbReference type="InterPro" id="IPR022383">
    <property type="entry name" value="Lactate/malate_DH_C"/>
</dbReference>
<dbReference type="InterPro" id="IPR001236">
    <property type="entry name" value="Lactate/malate_DH_N"/>
</dbReference>
<dbReference type="InterPro" id="IPR015955">
    <property type="entry name" value="Lactate_DH/Glyco_Ohase_4_C"/>
</dbReference>
<dbReference type="InterPro" id="IPR011275">
    <property type="entry name" value="Malate_DH_type3"/>
</dbReference>
<dbReference type="InterPro" id="IPR036291">
    <property type="entry name" value="NAD(P)-bd_dom_sf"/>
</dbReference>
<dbReference type="NCBIfam" id="TIGR01763">
    <property type="entry name" value="MalateDH_bact"/>
    <property type="match status" value="1"/>
</dbReference>
<dbReference type="NCBIfam" id="NF004863">
    <property type="entry name" value="PRK06223.1"/>
    <property type="match status" value="1"/>
</dbReference>
<dbReference type="PANTHER" id="PTHR43128">
    <property type="entry name" value="L-2-HYDROXYCARBOXYLATE DEHYDROGENASE (NAD(P)(+))"/>
    <property type="match status" value="1"/>
</dbReference>
<dbReference type="PANTHER" id="PTHR43128:SF16">
    <property type="entry name" value="L-LACTATE DEHYDROGENASE"/>
    <property type="match status" value="1"/>
</dbReference>
<dbReference type="Pfam" id="PF02866">
    <property type="entry name" value="Ldh_1_C"/>
    <property type="match status" value="1"/>
</dbReference>
<dbReference type="Pfam" id="PF00056">
    <property type="entry name" value="Ldh_1_N"/>
    <property type="match status" value="1"/>
</dbReference>
<dbReference type="PIRSF" id="PIRSF000102">
    <property type="entry name" value="Lac_mal_DH"/>
    <property type="match status" value="1"/>
</dbReference>
<dbReference type="PRINTS" id="PR00086">
    <property type="entry name" value="LLDHDRGNASE"/>
</dbReference>
<dbReference type="SUPFAM" id="SSF56327">
    <property type="entry name" value="LDH C-terminal domain-like"/>
    <property type="match status" value="1"/>
</dbReference>
<dbReference type="SUPFAM" id="SSF51735">
    <property type="entry name" value="NAD(P)-binding Rossmann-fold domains"/>
    <property type="match status" value="1"/>
</dbReference>
<name>MDH_BACC3</name>
<gene>
    <name evidence="1" type="primary">mdh</name>
    <name type="ordered locus">BCA_4702</name>
</gene>
<accession>C1EUT6</accession>
<sequence>MTIKRKKVSVIGAGFTGATTAFLLAQKELADVVLVDIPQLENPTKGKALDMLEASPVQGFDANIIGTSDYADTADSDVVVITAGIARKPGMSRDDLVATNSKIMKSITRDIAKHSPNAIIVVLTNPVDAMTYSVFKEAGFPKERVIGQSGVLDTARFRTFIAQELNLSVKDITGFVLGGHGDDMVPLVRYSYAGGIPLETLIPKERLEAIVERTRKGGGEIVGLLGNGSAYYAPAASLVEMTEAILKDQRRVLPAIAYLEGEYGYSDLYLGVPVILGGNGIEKIIELELLADEKEALDRSVESVRNVMKVLV</sequence>